<evidence type="ECO:0000255" key="1">
    <source>
        <dbReference type="HAMAP-Rule" id="MF_00518"/>
    </source>
</evidence>
<dbReference type="EC" id="3.1.1.96" evidence="1"/>
<dbReference type="EMBL" id="CP000605">
    <property type="protein sequence ID" value="ACD97633.1"/>
    <property type="molecule type" value="Genomic_DNA"/>
</dbReference>
<dbReference type="RefSeq" id="WP_007057516.1">
    <property type="nucleotide sequence ID" value="NZ_AABM02000003.1"/>
</dbReference>
<dbReference type="SMR" id="B3DQN7"/>
<dbReference type="KEGG" id="blj:BLD_0187"/>
<dbReference type="HOGENOM" id="CLU_076901_1_0_11"/>
<dbReference type="Proteomes" id="UP000002419">
    <property type="component" value="Chromosome"/>
</dbReference>
<dbReference type="GO" id="GO:0005737">
    <property type="term" value="C:cytoplasm"/>
    <property type="evidence" value="ECO:0007669"/>
    <property type="project" value="UniProtKB-SubCell"/>
</dbReference>
<dbReference type="GO" id="GO:0051500">
    <property type="term" value="F:D-tyrosyl-tRNA(Tyr) deacylase activity"/>
    <property type="evidence" value="ECO:0007669"/>
    <property type="project" value="TreeGrafter"/>
</dbReference>
<dbReference type="GO" id="GO:0106026">
    <property type="term" value="F:Gly-tRNA(Ala) deacylase activity"/>
    <property type="evidence" value="ECO:0007669"/>
    <property type="project" value="UniProtKB-UniRule"/>
</dbReference>
<dbReference type="GO" id="GO:0043908">
    <property type="term" value="F:Ser(Gly)-tRNA(Ala) hydrolase activity"/>
    <property type="evidence" value="ECO:0007669"/>
    <property type="project" value="UniProtKB-UniRule"/>
</dbReference>
<dbReference type="GO" id="GO:0000049">
    <property type="term" value="F:tRNA binding"/>
    <property type="evidence" value="ECO:0007669"/>
    <property type="project" value="UniProtKB-UniRule"/>
</dbReference>
<dbReference type="GO" id="GO:0019478">
    <property type="term" value="P:D-amino acid catabolic process"/>
    <property type="evidence" value="ECO:0007669"/>
    <property type="project" value="UniProtKB-UniRule"/>
</dbReference>
<dbReference type="FunFam" id="3.50.80.10:FF:000001">
    <property type="entry name" value="D-aminoacyl-tRNA deacylase"/>
    <property type="match status" value="1"/>
</dbReference>
<dbReference type="Gene3D" id="3.50.80.10">
    <property type="entry name" value="D-tyrosyl-tRNA(Tyr) deacylase"/>
    <property type="match status" value="1"/>
</dbReference>
<dbReference type="HAMAP" id="MF_00518">
    <property type="entry name" value="Deacylase_Dtd"/>
    <property type="match status" value="1"/>
</dbReference>
<dbReference type="InterPro" id="IPR003732">
    <property type="entry name" value="Daa-tRNA_deacyls_DTD"/>
</dbReference>
<dbReference type="InterPro" id="IPR023509">
    <property type="entry name" value="DTD-like_sf"/>
</dbReference>
<dbReference type="NCBIfam" id="TIGR00256">
    <property type="entry name" value="D-aminoacyl-tRNA deacylase"/>
    <property type="match status" value="1"/>
</dbReference>
<dbReference type="PANTHER" id="PTHR10472:SF5">
    <property type="entry name" value="D-AMINOACYL-TRNA DEACYLASE 1"/>
    <property type="match status" value="1"/>
</dbReference>
<dbReference type="PANTHER" id="PTHR10472">
    <property type="entry name" value="D-TYROSYL-TRNA TYR DEACYLASE"/>
    <property type="match status" value="1"/>
</dbReference>
<dbReference type="Pfam" id="PF02580">
    <property type="entry name" value="Tyr_Deacylase"/>
    <property type="match status" value="1"/>
</dbReference>
<dbReference type="SUPFAM" id="SSF69500">
    <property type="entry name" value="DTD-like"/>
    <property type="match status" value="1"/>
</dbReference>
<accession>B3DQN7</accession>
<reference key="1">
    <citation type="journal article" date="2008" name="BMC Genomics">
        <title>Comparative genomic analysis of the gut bacterium Bifidobacterium longum reveals loci susceptible to deletion during pure culture growth.</title>
        <authorList>
            <person name="Lee J.H."/>
            <person name="Karamychev V.N."/>
            <person name="Kozyavkin S.A."/>
            <person name="Mills D."/>
            <person name="Pavlov A.R."/>
            <person name="Pavlova N.V."/>
            <person name="Polouchine N.N."/>
            <person name="Richardson P.M."/>
            <person name="Shakhova V.V."/>
            <person name="Slesarev A.I."/>
            <person name="Weimer B."/>
            <person name="O'Sullivan D.J."/>
        </authorList>
    </citation>
    <scope>NUCLEOTIDE SEQUENCE [LARGE SCALE GENOMIC DNA]</scope>
    <source>
        <strain>DJO10A</strain>
    </source>
</reference>
<gene>
    <name evidence="1" type="primary">dtd</name>
    <name type="ordered locus">BLD_0187</name>
</gene>
<protein>
    <recommendedName>
        <fullName evidence="1">D-aminoacyl-tRNA deacylase</fullName>
        <shortName evidence="1">DTD</shortName>
        <ecNumber evidence="1">3.1.1.96</ecNumber>
    </recommendedName>
    <alternativeName>
        <fullName evidence="1">Gly-tRNA(Ala) deacylase</fullName>
    </alternativeName>
</protein>
<name>DTD_BIFLD</name>
<feature type="chain" id="PRO_1000127496" description="D-aminoacyl-tRNA deacylase">
    <location>
        <begin position="1"/>
        <end position="162"/>
    </location>
</feature>
<feature type="short sequence motif" description="Gly-cisPro motif, important for rejection of L-amino acids" evidence="1">
    <location>
        <begin position="145"/>
        <end position="146"/>
    </location>
</feature>
<organism>
    <name type="scientific">Bifidobacterium longum (strain DJO10A)</name>
    <dbReference type="NCBI Taxonomy" id="205913"/>
    <lineage>
        <taxon>Bacteria</taxon>
        <taxon>Bacillati</taxon>
        <taxon>Actinomycetota</taxon>
        <taxon>Actinomycetes</taxon>
        <taxon>Bifidobacteriales</taxon>
        <taxon>Bifidobacteriaceae</taxon>
        <taxon>Bifidobacterium</taxon>
    </lineage>
</organism>
<proteinExistence type="inferred from homology"/>
<sequence length="162" mass="17853">MKVVLQRVSEASVDVVNELGTLDPTFEPQQIGPGFMILVGVTDEDGDKQIAWLAHKILNLRVFEDAQGKMNRSIQDIGGEILSISQFTLFADVHKGNRPSFIKAGKPEHADFMWIKFDEALRSGGVPVKEGRFGAHMRVGLVNDGPVTIVIDTEHDMPDGTR</sequence>
<comment type="function">
    <text evidence="1">An aminoacyl-tRNA editing enzyme that deacylates mischarged D-aminoacyl-tRNAs. Also deacylates mischarged glycyl-tRNA(Ala), protecting cells against glycine mischarging by AlaRS. Acts via tRNA-based rather than protein-based catalysis; rejects L-amino acids rather than detecting D-amino acids in the active site. By recycling D-aminoacyl-tRNA to D-amino acids and free tRNA molecules, this enzyme counteracts the toxicity associated with the formation of D-aminoacyl-tRNA entities in vivo and helps enforce protein L-homochirality.</text>
</comment>
<comment type="catalytic activity">
    <reaction evidence="1">
        <text>glycyl-tRNA(Ala) + H2O = tRNA(Ala) + glycine + H(+)</text>
        <dbReference type="Rhea" id="RHEA:53744"/>
        <dbReference type="Rhea" id="RHEA-COMP:9657"/>
        <dbReference type="Rhea" id="RHEA-COMP:13640"/>
        <dbReference type="ChEBI" id="CHEBI:15377"/>
        <dbReference type="ChEBI" id="CHEBI:15378"/>
        <dbReference type="ChEBI" id="CHEBI:57305"/>
        <dbReference type="ChEBI" id="CHEBI:78442"/>
        <dbReference type="ChEBI" id="CHEBI:78522"/>
        <dbReference type="EC" id="3.1.1.96"/>
    </reaction>
</comment>
<comment type="catalytic activity">
    <reaction evidence="1">
        <text>a D-aminoacyl-tRNA + H2O = a tRNA + a D-alpha-amino acid + H(+)</text>
        <dbReference type="Rhea" id="RHEA:13953"/>
        <dbReference type="Rhea" id="RHEA-COMP:10123"/>
        <dbReference type="Rhea" id="RHEA-COMP:10124"/>
        <dbReference type="ChEBI" id="CHEBI:15377"/>
        <dbReference type="ChEBI" id="CHEBI:15378"/>
        <dbReference type="ChEBI" id="CHEBI:59871"/>
        <dbReference type="ChEBI" id="CHEBI:78442"/>
        <dbReference type="ChEBI" id="CHEBI:79333"/>
        <dbReference type="EC" id="3.1.1.96"/>
    </reaction>
</comment>
<comment type="subunit">
    <text evidence="1">Homodimer.</text>
</comment>
<comment type="subcellular location">
    <subcellularLocation>
        <location evidence="1">Cytoplasm</location>
    </subcellularLocation>
</comment>
<comment type="domain">
    <text evidence="1">A Gly-cisPro motif from one monomer fits into the active site of the other monomer to allow specific chiral rejection of L-amino acids.</text>
</comment>
<comment type="similarity">
    <text evidence="1">Belongs to the DTD family.</text>
</comment>
<keyword id="KW-0963">Cytoplasm</keyword>
<keyword id="KW-0378">Hydrolase</keyword>
<keyword id="KW-0694">RNA-binding</keyword>
<keyword id="KW-0820">tRNA-binding</keyword>